<organism>
    <name type="scientific">Escherichia coli O7:K1 (strain IAI39 / ExPEC)</name>
    <dbReference type="NCBI Taxonomy" id="585057"/>
    <lineage>
        <taxon>Bacteria</taxon>
        <taxon>Pseudomonadati</taxon>
        <taxon>Pseudomonadota</taxon>
        <taxon>Gammaproteobacteria</taxon>
        <taxon>Enterobacterales</taxon>
        <taxon>Enterobacteriaceae</taxon>
        <taxon>Escherichia</taxon>
    </lineage>
</organism>
<comment type="function">
    <text evidence="1">O-methyltransferase that catalyzes the 2 O-methylation steps in the ubiquinone biosynthetic pathway.</text>
</comment>
<comment type="catalytic activity">
    <reaction evidence="1">
        <text>a 3-demethylubiquinol + S-adenosyl-L-methionine = a ubiquinol + S-adenosyl-L-homocysteine + H(+)</text>
        <dbReference type="Rhea" id="RHEA:44380"/>
        <dbReference type="Rhea" id="RHEA-COMP:9566"/>
        <dbReference type="Rhea" id="RHEA-COMP:10914"/>
        <dbReference type="ChEBI" id="CHEBI:15378"/>
        <dbReference type="ChEBI" id="CHEBI:17976"/>
        <dbReference type="ChEBI" id="CHEBI:57856"/>
        <dbReference type="ChEBI" id="CHEBI:59789"/>
        <dbReference type="ChEBI" id="CHEBI:84422"/>
        <dbReference type="EC" id="2.1.1.64"/>
    </reaction>
</comment>
<comment type="catalytic activity">
    <reaction evidence="1">
        <text>a 3-(all-trans-polyprenyl)benzene-1,2-diol + S-adenosyl-L-methionine = a 2-methoxy-6-(all-trans-polyprenyl)phenol + S-adenosyl-L-homocysteine + H(+)</text>
        <dbReference type="Rhea" id="RHEA:31411"/>
        <dbReference type="Rhea" id="RHEA-COMP:9550"/>
        <dbReference type="Rhea" id="RHEA-COMP:9551"/>
        <dbReference type="ChEBI" id="CHEBI:15378"/>
        <dbReference type="ChEBI" id="CHEBI:57856"/>
        <dbReference type="ChEBI" id="CHEBI:59789"/>
        <dbReference type="ChEBI" id="CHEBI:62729"/>
        <dbReference type="ChEBI" id="CHEBI:62731"/>
        <dbReference type="EC" id="2.1.1.222"/>
    </reaction>
</comment>
<comment type="pathway">
    <text evidence="1">Cofactor biosynthesis; ubiquinone biosynthesis.</text>
</comment>
<comment type="similarity">
    <text evidence="1">Belongs to the methyltransferase superfamily. UbiG/COQ3 family.</text>
</comment>
<gene>
    <name evidence="1" type="primary">ubiG</name>
    <name type="ordered locus">ECIAI39_2373</name>
</gene>
<keyword id="KW-0489">Methyltransferase</keyword>
<keyword id="KW-0949">S-adenosyl-L-methionine</keyword>
<keyword id="KW-0808">Transferase</keyword>
<keyword id="KW-0831">Ubiquinone biosynthesis</keyword>
<protein>
    <recommendedName>
        <fullName evidence="1">Ubiquinone biosynthesis O-methyltransferase</fullName>
    </recommendedName>
    <alternativeName>
        <fullName evidence="1">2-octaprenyl-6-hydroxyphenol methylase</fullName>
        <ecNumber evidence="1">2.1.1.222</ecNumber>
    </alternativeName>
    <alternativeName>
        <fullName evidence="1">3-demethylubiquinone-8 3-O-methyltransferase</fullName>
        <ecNumber evidence="1">2.1.1.64</ecNumber>
    </alternativeName>
</protein>
<feature type="chain" id="PRO_1000199684" description="Ubiquinone biosynthesis O-methyltransferase">
    <location>
        <begin position="1"/>
        <end position="240"/>
    </location>
</feature>
<feature type="binding site" evidence="1">
    <location>
        <position position="44"/>
    </location>
    <ligand>
        <name>S-adenosyl-L-methionine</name>
        <dbReference type="ChEBI" id="CHEBI:59789"/>
    </ligand>
</feature>
<feature type="binding site" evidence="1">
    <location>
        <position position="64"/>
    </location>
    <ligand>
        <name>S-adenosyl-L-methionine</name>
        <dbReference type="ChEBI" id="CHEBI:59789"/>
    </ligand>
</feature>
<feature type="binding site" evidence="1">
    <location>
        <position position="85"/>
    </location>
    <ligand>
        <name>S-adenosyl-L-methionine</name>
        <dbReference type="ChEBI" id="CHEBI:59789"/>
    </ligand>
</feature>
<feature type="binding site" evidence="1">
    <location>
        <position position="129"/>
    </location>
    <ligand>
        <name>S-adenosyl-L-methionine</name>
        <dbReference type="ChEBI" id="CHEBI:59789"/>
    </ligand>
</feature>
<dbReference type="EC" id="2.1.1.222" evidence="1"/>
<dbReference type="EC" id="2.1.1.64" evidence="1"/>
<dbReference type="EMBL" id="CU928164">
    <property type="protein sequence ID" value="CAR18499.1"/>
    <property type="molecule type" value="Genomic_DNA"/>
</dbReference>
<dbReference type="RefSeq" id="WP_001091059.1">
    <property type="nucleotide sequence ID" value="NC_011750.1"/>
</dbReference>
<dbReference type="RefSeq" id="YP_002408331.1">
    <property type="nucleotide sequence ID" value="NC_011750.1"/>
</dbReference>
<dbReference type="SMR" id="B7NN47"/>
<dbReference type="STRING" id="585057.ECIAI39_2373"/>
<dbReference type="KEGG" id="ect:ECIAI39_2373"/>
<dbReference type="PATRIC" id="fig|585057.6.peg.2473"/>
<dbReference type="HOGENOM" id="CLU_042432_5_0_6"/>
<dbReference type="UniPathway" id="UPA00232"/>
<dbReference type="Proteomes" id="UP000000749">
    <property type="component" value="Chromosome"/>
</dbReference>
<dbReference type="GO" id="GO:0102208">
    <property type="term" value="F:2-polyprenyl-6-hydroxyphenol methylase activity"/>
    <property type="evidence" value="ECO:0007669"/>
    <property type="project" value="UniProtKB-EC"/>
</dbReference>
<dbReference type="GO" id="GO:0061542">
    <property type="term" value="F:3-demethylubiquinol 3-O-methyltransferase activity"/>
    <property type="evidence" value="ECO:0007669"/>
    <property type="project" value="UniProtKB-UniRule"/>
</dbReference>
<dbReference type="GO" id="GO:0010420">
    <property type="term" value="F:polyprenyldihydroxybenzoate methyltransferase activity"/>
    <property type="evidence" value="ECO:0007669"/>
    <property type="project" value="InterPro"/>
</dbReference>
<dbReference type="GO" id="GO:0032259">
    <property type="term" value="P:methylation"/>
    <property type="evidence" value="ECO:0007669"/>
    <property type="project" value="UniProtKB-KW"/>
</dbReference>
<dbReference type="CDD" id="cd02440">
    <property type="entry name" value="AdoMet_MTases"/>
    <property type="match status" value="1"/>
</dbReference>
<dbReference type="FunFam" id="3.40.50.150:FF:000028">
    <property type="entry name" value="Ubiquinone biosynthesis O-methyltransferase"/>
    <property type="match status" value="1"/>
</dbReference>
<dbReference type="Gene3D" id="3.40.50.150">
    <property type="entry name" value="Vaccinia Virus protein VP39"/>
    <property type="match status" value="1"/>
</dbReference>
<dbReference type="HAMAP" id="MF_00472">
    <property type="entry name" value="UbiG"/>
    <property type="match status" value="1"/>
</dbReference>
<dbReference type="InterPro" id="IPR029063">
    <property type="entry name" value="SAM-dependent_MTases_sf"/>
</dbReference>
<dbReference type="InterPro" id="IPR010233">
    <property type="entry name" value="UbiG_MeTrfase"/>
</dbReference>
<dbReference type="NCBIfam" id="TIGR01983">
    <property type="entry name" value="UbiG"/>
    <property type="match status" value="1"/>
</dbReference>
<dbReference type="PANTHER" id="PTHR43464">
    <property type="entry name" value="METHYLTRANSFERASE"/>
    <property type="match status" value="1"/>
</dbReference>
<dbReference type="PANTHER" id="PTHR43464:SF19">
    <property type="entry name" value="UBIQUINONE BIOSYNTHESIS O-METHYLTRANSFERASE, MITOCHONDRIAL"/>
    <property type="match status" value="1"/>
</dbReference>
<dbReference type="Pfam" id="PF13489">
    <property type="entry name" value="Methyltransf_23"/>
    <property type="match status" value="1"/>
</dbReference>
<dbReference type="SUPFAM" id="SSF53335">
    <property type="entry name" value="S-adenosyl-L-methionine-dependent methyltransferases"/>
    <property type="match status" value="1"/>
</dbReference>
<proteinExistence type="inferred from homology"/>
<evidence type="ECO:0000255" key="1">
    <source>
        <dbReference type="HAMAP-Rule" id="MF_00472"/>
    </source>
</evidence>
<accession>B7NN47</accession>
<name>UBIG_ECO7I</name>
<sequence length="240" mass="26638">MNTENLLKNNNVDHEEIAKFEAVASRWWDLEGEFKPLHRINPLRLGYIAERAGGLFGKKVLDVGCGGGILAESMAREGATVTGLDMGFEPLQVAKLHALESGIQVEYVQETVEEHAAKHAGQYDVVTCMEMLEHVPDPQSVVRACAQLVKPGGDVFFSTLNRNGKSWLMAVVGAEYILRMVPKGTHDVKKFIKPAELLGWVDQTSLKERHMTGLHYNPITNSFKLGPGVDVNYMLHTQNK</sequence>
<reference key="1">
    <citation type="journal article" date="2009" name="PLoS Genet.">
        <title>Organised genome dynamics in the Escherichia coli species results in highly diverse adaptive paths.</title>
        <authorList>
            <person name="Touchon M."/>
            <person name="Hoede C."/>
            <person name="Tenaillon O."/>
            <person name="Barbe V."/>
            <person name="Baeriswyl S."/>
            <person name="Bidet P."/>
            <person name="Bingen E."/>
            <person name="Bonacorsi S."/>
            <person name="Bouchier C."/>
            <person name="Bouvet O."/>
            <person name="Calteau A."/>
            <person name="Chiapello H."/>
            <person name="Clermont O."/>
            <person name="Cruveiller S."/>
            <person name="Danchin A."/>
            <person name="Diard M."/>
            <person name="Dossat C."/>
            <person name="Karoui M.E."/>
            <person name="Frapy E."/>
            <person name="Garry L."/>
            <person name="Ghigo J.M."/>
            <person name="Gilles A.M."/>
            <person name="Johnson J."/>
            <person name="Le Bouguenec C."/>
            <person name="Lescat M."/>
            <person name="Mangenot S."/>
            <person name="Martinez-Jehanne V."/>
            <person name="Matic I."/>
            <person name="Nassif X."/>
            <person name="Oztas S."/>
            <person name="Petit M.A."/>
            <person name="Pichon C."/>
            <person name="Rouy Z."/>
            <person name="Ruf C.S."/>
            <person name="Schneider D."/>
            <person name="Tourret J."/>
            <person name="Vacherie B."/>
            <person name="Vallenet D."/>
            <person name="Medigue C."/>
            <person name="Rocha E.P.C."/>
            <person name="Denamur E."/>
        </authorList>
    </citation>
    <scope>NUCLEOTIDE SEQUENCE [LARGE SCALE GENOMIC DNA]</scope>
    <source>
        <strain>IAI39 / ExPEC</strain>
    </source>
</reference>